<keyword id="KW-0963">Cytoplasm</keyword>
<keyword id="KW-0460">Magnesium</keyword>
<keyword id="KW-0479">Metal-binding</keyword>
<keyword id="KW-0566">Pantothenate biosynthesis</keyword>
<keyword id="KW-0808">Transferase</keyword>
<dbReference type="EC" id="2.1.2.11" evidence="1"/>
<dbReference type="EMBL" id="CP001175">
    <property type="protein sequence ID" value="ACK39010.1"/>
    <property type="molecule type" value="Genomic_DNA"/>
</dbReference>
<dbReference type="RefSeq" id="WP_012581080.1">
    <property type="nucleotide sequence ID" value="NC_011660.1"/>
</dbReference>
<dbReference type="SMR" id="B8DC24"/>
<dbReference type="KEGG" id="lmh:LMHCC_0655"/>
<dbReference type="HOGENOM" id="CLU_036645_1_0_9"/>
<dbReference type="UniPathway" id="UPA00028">
    <property type="reaction ID" value="UER00003"/>
</dbReference>
<dbReference type="GO" id="GO:0005737">
    <property type="term" value="C:cytoplasm"/>
    <property type="evidence" value="ECO:0007669"/>
    <property type="project" value="UniProtKB-SubCell"/>
</dbReference>
<dbReference type="GO" id="GO:0003864">
    <property type="term" value="F:3-methyl-2-oxobutanoate hydroxymethyltransferase activity"/>
    <property type="evidence" value="ECO:0007669"/>
    <property type="project" value="UniProtKB-UniRule"/>
</dbReference>
<dbReference type="GO" id="GO:0000287">
    <property type="term" value="F:magnesium ion binding"/>
    <property type="evidence" value="ECO:0007669"/>
    <property type="project" value="TreeGrafter"/>
</dbReference>
<dbReference type="GO" id="GO:0015940">
    <property type="term" value="P:pantothenate biosynthetic process"/>
    <property type="evidence" value="ECO:0007669"/>
    <property type="project" value="UniProtKB-UniRule"/>
</dbReference>
<dbReference type="CDD" id="cd06557">
    <property type="entry name" value="KPHMT-like"/>
    <property type="match status" value="1"/>
</dbReference>
<dbReference type="FunFam" id="3.20.20.60:FF:000003">
    <property type="entry name" value="3-methyl-2-oxobutanoate hydroxymethyltransferase"/>
    <property type="match status" value="1"/>
</dbReference>
<dbReference type="Gene3D" id="3.20.20.60">
    <property type="entry name" value="Phosphoenolpyruvate-binding domains"/>
    <property type="match status" value="1"/>
</dbReference>
<dbReference type="HAMAP" id="MF_00156">
    <property type="entry name" value="PanB"/>
    <property type="match status" value="1"/>
</dbReference>
<dbReference type="InterPro" id="IPR003700">
    <property type="entry name" value="Pantoate_hydroxy_MeTrfase"/>
</dbReference>
<dbReference type="InterPro" id="IPR015813">
    <property type="entry name" value="Pyrv/PenolPyrv_kinase-like_dom"/>
</dbReference>
<dbReference type="InterPro" id="IPR040442">
    <property type="entry name" value="Pyrv_kinase-like_dom_sf"/>
</dbReference>
<dbReference type="NCBIfam" id="TIGR00222">
    <property type="entry name" value="panB"/>
    <property type="match status" value="1"/>
</dbReference>
<dbReference type="NCBIfam" id="NF001452">
    <property type="entry name" value="PRK00311.1"/>
    <property type="match status" value="1"/>
</dbReference>
<dbReference type="PANTHER" id="PTHR20881">
    <property type="entry name" value="3-METHYL-2-OXOBUTANOATE HYDROXYMETHYLTRANSFERASE"/>
    <property type="match status" value="1"/>
</dbReference>
<dbReference type="PANTHER" id="PTHR20881:SF0">
    <property type="entry name" value="3-METHYL-2-OXOBUTANOATE HYDROXYMETHYLTRANSFERASE"/>
    <property type="match status" value="1"/>
</dbReference>
<dbReference type="Pfam" id="PF02548">
    <property type="entry name" value="Pantoate_transf"/>
    <property type="match status" value="1"/>
</dbReference>
<dbReference type="PIRSF" id="PIRSF000388">
    <property type="entry name" value="Pantoate_hydroxy_MeTrfase"/>
    <property type="match status" value="1"/>
</dbReference>
<dbReference type="SUPFAM" id="SSF51621">
    <property type="entry name" value="Phosphoenolpyruvate/pyruvate domain"/>
    <property type="match status" value="1"/>
</dbReference>
<sequence>MKKPVDFFAMKENGEKITMITAYDYPSAKNVEQAEADMILVGDSLGMVVLGYDSTVPVTMDDMIHHTKAVKRGAPDTFVVTDMPFMTYHGSVDETIQNARKIIQESGAHAVKLEGAGEVVNKIARLTEAGAPVVAHLGLTPQSVGLTGSYKVRAKSAQEAQELMDNALAVEAAGAIAIVLEAIPRQLAEKVSKALSIPTIGIGAGVETDGQVLVYHDIIGYGISRRAKFVKAYAEIDETIEPALASYVKEVKAATFPEVKHSFTMAEEDLKGLYGRE</sequence>
<gene>
    <name evidence="1" type="primary">panB</name>
    <name type="ordered locus">LMHCC_0655</name>
</gene>
<accession>B8DC24</accession>
<organism>
    <name type="scientific">Listeria monocytogenes serotype 4a (strain HCC23)</name>
    <dbReference type="NCBI Taxonomy" id="552536"/>
    <lineage>
        <taxon>Bacteria</taxon>
        <taxon>Bacillati</taxon>
        <taxon>Bacillota</taxon>
        <taxon>Bacilli</taxon>
        <taxon>Bacillales</taxon>
        <taxon>Listeriaceae</taxon>
        <taxon>Listeria</taxon>
    </lineage>
</organism>
<evidence type="ECO:0000255" key="1">
    <source>
        <dbReference type="HAMAP-Rule" id="MF_00156"/>
    </source>
</evidence>
<reference key="1">
    <citation type="journal article" date="2011" name="J. Bacteriol.">
        <title>Genome sequence of lineage III Listeria monocytogenes strain HCC23.</title>
        <authorList>
            <person name="Steele C.L."/>
            <person name="Donaldson J.R."/>
            <person name="Paul D."/>
            <person name="Banes M.M."/>
            <person name="Arick T."/>
            <person name="Bridges S.M."/>
            <person name="Lawrence M.L."/>
        </authorList>
    </citation>
    <scope>NUCLEOTIDE SEQUENCE [LARGE SCALE GENOMIC DNA]</scope>
    <source>
        <strain>HCC23</strain>
    </source>
</reference>
<feature type="chain" id="PRO_1000123384" description="3-methyl-2-oxobutanoate hydroxymethyltransferase">
    <location>
        <begin position="1"/>
        <end position="277"/>
    </location>
</feature>
<feature type="active site" description="Proton acceptor" evidence="1">
    <location>
        <position position="181"/>
    </location>
</feature>
<feature type="binding site" evidence="1">
    <location>
        <begin position="43"/>
        <end position="44"/>
    </location>
    <ligand>
        <name>3-methyl-2-oxobutanoate</name>
        <dbReference type="ChEBI" id="CHEBI:11851"/>
    </ligand>
</feature>
<feature type="binding site" evidence="1">
    <location>
        <position position="43"/>
    </location>
    <ligand>
        <name>Mg(2+)</name>
        <dbReference type="ChEBI" id="CHEBI:18420"/>
    </ligand>
</feature>
<feature type="binding site" evidence="1">
    <location>
        <position position="82"/>
    </location>
    <ligand>
        <name>3-methyl-2-oxobutanoate</name>
        <dbReference type="ChEBI" id="CHEBI:11851"/>
    </ligand>
</feature>
<feature type="binding site" evidence="1">
    <location>
        <position position="82"/>
    </location>
    <ligand>
        <name>Mg(2+)</name>
        <dbReference type="ChEBI" id="CHEBI:18420"/>
    </ligand>
</feature>
<feature type="binding site" evidence="1">
    <location>
        <position position="112"/>
    </location>
    <ligand>
        <name>3-methyl-2-oxobutanoate</name>
        <dbReference type="ChEBI" id="CHEBI:11851"/>
    </ligand>
</feature>
<feature type="binding site" evidence="1">
    <location>
        <position position="114"/>
    </location>
    <ligand>
        <name>Mg(2+)</name>
        <dbReference type="ChEBI" id="CHEBI:18420"/>
    </ligand>
</feature>
<comment type="function">
    <text evidence="1">Catalyzes the reversible reaction in which hydroxymethyl group from 5,10-methylenetetrahydrofolate is transferred onto alpha-ketoisovalerate to form ketopantoate.</text>
</comment>
<comment type="catalytic activity">
    <reaction evidence="1">
        <text>3-methyl-2-oxobutanoate + (6R)-5,10-methylene-5,6,7,8-tetrahydrofolate + H2O = 2-dehydropantoate + (6S)-5,6,7,8-tetrahydrofolate</text>
        <dbReference type="Rhea" id="RHEA:11824"/>
        <dbReference type="ChEBI" id="CHEBI:11561"/>
        <dbReference type="ChEBI" id="CHEBI:11851"/>
        <dbReference type="ChEBI" id="CHEBI:15377"/>
        <dbReference type="ChEBI" id="CHEBI:15636"/>
        <dbReference type="ChEBI" id="CHEBI:57453"/>
        <dbReference type="EC" id="2.1.2.11"/>
    </reaction>
</comment>
<comment type="cofactor">
    <cofactor evidence="1">
        <name>Mg(2+)</name>
        <dbReference type="ChEBI" id="CHEBI:18420"/>
    </cofactor>
    <text evidence="1">Binds 1 Mg(2+) ion per subunit.</text>
</comment>
<comment type="pathway">
    <text evidence="1">Cofactor biosynthesis; (R)-pantothenate biosynthesis; (R)-pantoate from 3-methyl-2-oxobutanoate: step 1/2.</text>
</comment>
<comment type="subunit">
    <text evidence="1">Homodecamer; pentamer of dimers.</text>
</comment>
<comment type="subcellular location">
    <subcellularLocation>
        <location evidence="1">Cytoplasm</location>
    </subcellularLocation>
</comment>
<comment type="similarity">
    <text evidence="1">Belongs to the PanB family.</text>
</comment>
<protein>
    <recommendedName>
        <fullName evidence="1">3-methyl-2-oxobutanoate hydroxymethyltransferase</fullName>
        <ecNumber evidence="1">2.1.2.11</ecNumber>
    </recommendedName>
    <alternativeName>
        <fullName evidence="1">Ketopantoate hydroxymethyltransferase</fullName>
        <shortName evidence="1">KPHMT</shortName>
    </alternativeName>
</protein>
<name>PANB_LISMH</name>
<proteinExistence type="inferred from homology"/>